<dbReference type="EMBL" id="BA000033">
    <property type="protein sequence ID" value="BAB94880.1"/>
    <property type="molecule type" value="Genomic_DNA"/>
</dbReference>
<dbReference type="RefSeq" id="WP_001220199.1">
    <property type="nucleotide sequence ID" value="NC_003923.1"/>
</dbReference>
<dbReference type="SMR" id="Q7A150"/>
<dbReference type="KEGG" id="sam:MW1015"/>
<dbReference type="HOGENOM" id="CLU_038034_2_3_9"/>
<dbReference type="GO" id="GO:0005886">
    <property type="term" value="C:plasma membrane"/>
    <property type="evidence" value="ECO:0007669"/>
    <property type="project" value="UniProtKB-SubCell"/>
</dbReference>
<dbReference type="GO" id="GO:0020037">
    <property type="term" value="F:heme binding"/>
    <property type="evidence" value="ECO:0007669"/>
    <property type="project" value="InterPro"/>
</dbReference>
<dbReference type="GO" id="GO:0046872">
    <property type="term" value="F:metal ion binding"/>
    <property type="evidence" value="ECO:0007669"/>
    <property type="project" value="UniProtKB-KW"/>
</dbReference>
<dbReference type="GO" id="GO:0071281">
    <property type="term" value="P:cellular response to iron ion"/>
    <property type="evidence" value="ECO:0007669"/>
    <property type="project" value="TreeGrafter"/>
</dbReference>
<dbReference type="GO" id="GO:0015886">
    <property type="term" value="P:heme transport"/>
    <property type="evidence" value="ECO:0007669"/>
    <property type="project" value="InterPro"/>
</dbReference>
<dbReference type="FunFam" id="3.40.50.1980:FF:000022">
    <property type="entry name" value="Heme ABC transporter substrate-binding protein IsdE"/>
    <property type="match status" value="1"/>
</dbReference>
<dbReference type="FunFam" id="3.40.50.1980:FF:000031">
    <property type="entry name" value="High-affinity heme uptake system protein IsdE"/>
    <property type="match status" value="1"/>
</dbReference>
<dbReference type="Gene3D" id="3.40.50.1980">
    <property type="entry name" value="Nitrogenase molybdenum iron protein domain"/>
    <property type="match status" value="2"/>
</dbReference>
<dbReference type="InterPro" id="IPR050902">
    <property type="entry name" value="ABC_Transporter_SBP"/>
</dbReference>
<dbReference type="InterPro" id="IPR019957">
    <property type="entry name" value="ABC_transptr_haem-bd_IsdE"/>
</dbReference>
<dbReference type="InterPro" id="IPR002491">
    <property type="entry name" value="ABC_transptr_periplasmic_BD"/>
</dbReference>
<dbReference type="NCBIfam" id="TIGR03659">
    <property type="entry name" value="IsdE"/>
    <property type="match status" value="1"/>
</dbReference>
<dbReference type="PANTHER" id="PTHR30535:SF36">
    <property type="entry name" value="HIGH-AFFINITY HEME UPTAKE SYSTEM PROTEIN ISDE"/>
    <property type="match status" value="1"/>
</dbReference>
<dbReference type="PANTHER" id="PTHR30535">
    <property type="entry name" value="VITAMIN B12-BINDING PROTEIN"/>
    <property type="match status" value="1"/>
</dbReference>
<dbReference type="Pfam" id="PF01497">
    <property type="entry name" value="Peripla_BP_2"/>
    <property type="match status" value="1"/>
</dbReference>
<dbReference type="SUPFAM" id="SSF53807">
    <property type="entry name" value="Helical backbone' metal receptor"/>
    <property type="match status" value="1"/>
</dbReference>
<dbReference type="PROSITE" id="PS50983">
    <property type="entry name" value="FE_B12_PBP"/>
    <property type="match status" value="1"/>
</dbReference>
<dbReference type="PROSITE" id="PS51257">
    <property type="entry name" value="PROKAR_LIPOPROTEIN"/>
    <property type="match status" value="1"/>
</dbReference>
<protein>
    <recommendedName>
        <fullName>High-affinity heme uptake system protein IsdE</fullName>
    </recommendedName>
    <alternativeName>
        <fullName>Iron-regulated surface determinant protein E</fullName>
    </alternativeName>
    <alternativeName>
        <fullName>Staphylococcal iron-regulated protein F</fullName>
    </alternativeName>
</protein>
<proteinExistence type="inferred from homology"/>
<name>ISDE_STAAW</name>
<keyword id="KW-1003">Cell membrane</keyword>
<keyword id="KW-0349">Heme</keyword>
<keyword id="KW-0408">Iron</keyword>
<keyword id="KW-0449">Lipoprotein</keyword>
<keyword id="KW-0472">Membrane</keyword>
<keyword id="KW-0479">Metal-binding</keyword>
<keyword id="KW-0564">Palmitate</keyword>
<keyword id="KW-0732">Signal</keyword>
<keyword id="KW-0813">Transport</keyword>
<reference key="1">
    <citation type="journal article" date="2002" name="Lancet">
        <title>Genome and virulence determinants of high virulence community-acquired MRSA.</title>
        <authorList>
            <person name="Baba T."/>
            <person name="Takeuchi F."/>
            <person name="Kuroda M."/>
            <person name="Yuzawa H."/>
            <person name="Aoki K."/>
            <person name="Oguchi A."/>
            <person name="Nagai Y."/>
            <person name="Iwama N."/>
            <person name="Asano K."/>
            <person name="Naimi T."/>
            <person name="Kuroda H."/>
            <person name="Cui L."/>
            <person name="Yamamoto K."/>
            <person name="Hiramatsu K."/>
        </authorList>
    </citation>
    <scope>NUCLEOTIDE SEQUENCE [LARGE SCALE GENOMIC DNA]</scope>
    <source>
        <strain>MW2</strain>
    </source>
</reference>
<organism>
    <name type="scientific">Staphylococcus aureus (strain MW2)</name>
    <dbReference type="NCBI Taxonomy" id="196620"/>
    <lineage>
        <taxon>Bacteria</taxon>
        <taxon>Bacillati</taxon>
        <taxon>Bacillota</taxon>
        <taxon>Bacilli</taxon>
        <taxon>Bacillales</taxon>
        <taxon>Staphylococcaceae</taxon>
        <taxon>Staphylococcus</taxon>
    </lineage>
</organism>
<feature type="signal peptide" evidence="2">
    <location>
        <begin position="1"/>
        <end position="19"/>
    </location>
</feature>
<feature type="chain" id="PRO_0000326213" description="High-affinity heme uptake system protein IsdE">
    <location>
        <begin position="20"/>
        <end position="292"/>
    </location>
</feature>
<feature type="domain" description="Fe/B12 periplasmic-binding" evidence="3">
    <location>
        <begin position="35"/>
        <end position="291"/>
    </location>
</feature>
<feature type="binding site" evidence="1">
    <location>
        <position position="41"/>
    </location>
    <ligand>
        <name>heme</name>
        <dbReference type="ChEBI" id="CHEBI:30413"/>
    </ligand>
</feature>
<feature type="binding site" evidence="1">
    <location>
        <position position="42"/>
    </location>
    <ligand>
        <name>heme</name>
        <dbReference type="ChEBI" id="CHEBI:30413"/>
    </ligand>
</feature>
<feature type="binding site" evidence="1">
    <location>
        <position position="60"/>
    </location>
    <ligand>
        <name>heme</name>
        <dbReference type="ChEBI" id="CHEBI:30413"/>
    </ligand>
</feature>
<feature type="binding site" evidence="1">
    <location>
        <position position="61"/>
    </location>
    <ligand>
        <name>heme</name>
        <dbReference type="ChEBI" id="CHEBI:30413"/>
    </ligand>
</feature>
<feature type="binding site" description="axial binding residue" evidence="1">
    <location>
        <position position="78"/>
    </location>
    <ligand>
        <name>heme</name>
        <dbReference type="ChEBI" id="CHEBI:30413"/>
    </ligand>
    <ligandPart>
        <name>Fe</name>
        <dbReference type="ChEBI" id="CHEBI:18248"/>
    </ligandPart>
</feature>
<feature type="binding site" description="axial binding residue" evidence="1">
    <location>
        <position position="229"/>
    </location>
    <ligand>
        <name>heme</name>
        <dbReference type="ChEBI" id="CHEBI:30413"/>
    </ligand>
    <ligandPart>
        <name>Fe</name>
        <dbReference type="ChEBI" id="CHEBI:18248"/>
    </ligandPart>
</feature>
<feature type="lipid moiety-binding region" description="N-palmitoyl cysteine" evidence="2">
    <location>
        <position position="20"/>
    </location>
</feature>
<feature type="lipid moiety-binding region" description="S-diacylglycerol cysteine" evidence="2">
    <location>
        <position position="20"/>
    </location>
</feature>
<accession>Q7A150</accession>
<sequence length="292" mass="33271">MRIIKYLTILVISVVILTSCQSSSSQESTKSGEFRIVPTTVALTMTLDKLDLPIVGKPTSYKTLPNRYKDVPEIGQPMEPNVEAVKKLKPTHVLSVSTIKDEMQPFYKQLNMKGYFYDFDSLKGMQKSITQLGDQFNRKAQAKELNDHLNSVKQKIENKAAKQKKHPKVLILMGVPGSYLVATDKSYIGDLVKIAGGENVIKVKDRQYISSNTENLLNINPDIILRLPHGMPEEVKKMFQKEFKQNDIWKHFKAVKNNHVYDLEEVPFGITANVDADKAMTQLYDLFYKDKK</sequence>
<evidence type="ECO:0000250" key="1"/>
<evidence type="ECO:0000255" key="2">
    <source>
        <dbReference type="PROSITE-ProRule" id="PRU00303"/>
    </source>
</evidence>
<evidence type="ECO:0000255" key="3">
    <source>
        <dbReference type="PROSITE-ProRule" id="PRU00344"/>
    </source>
</evidence>
<evidence type="ECO:0000305" key="4"/>
<gene>
    <name type="primary">isdE</name>
    <name type="synonym">sirF</name>
    <name type="ordered locus">MW1015</name>
</gene>
<comment type="function">
    <text evidence="1">Involved in heme (porphyrin) scavenging. Binds Fe(2+) and Fe(3+) heme but the largest fraction is Fe(2+) heme. Functions as a high-affinity heme binding protein and probably has a role in relaying heme-iron from cell wall-anchored isd proteins receptors to the putative probable IsdF (By similarity).</text>
</comment>
<comment type="cofactor">
    <cofactor evidence="1">
        <name>heme b</name>
        <dbReference type="ChEBI" id="CHEBI:60344"/>
    </cofactor>
    <text evidence="1">Binds 1 heme b (iron(II)-protoporphyrin IX) group per subunit.</text>
</comment>
<comment type="subcellular location">
    <subcellularLocation>
        <location evidence="2">Cell membrane</location>
        <topology evidence="2">Lipid-anchor</topology>
    </subcellularLocation>
</comment>
<comment type="induction">
    <text evidence="1">Repressed by fur in the presence of iron.</text>
</comment>
<comment type="similarity">
    <text evidence="4">Belongs to the bacterial solute-binding protein 8 family.</text>
</comment>